<name>OXSR1_PONAB</name>
<sequence>MSEDSSALPWSINRDDYELQEVIGSGATAVVQAAYCAPKKEKVAIKRINLEKCQTSMDELLKEIQAMSQCHHPNIVSYYTSFVVKDELWLVMKLLSGGSVLDIIKHIVAKGEHKSGVLDESTIATILREVLEGLEYLHKNGQIHRDVKAGNILLGEDGSVQIADFGVSAFLATGGDITRNKVRKTFVGTPCWMAPEVMEQVRGYDFKADIWSFGITAIELATGAAPYHKYPPMKVLMLTLQNDPPSLETGVQDKEMLKKYGKSFRKMISLCLQKDPEKRPTAAELLRHKFFQKAKNKEFLQEKILQRAPTISERAKKVRRVPGSSGRLHKTEDGGWEWSDDEFDEESEEGKAAISQLRSPRVKESISNSELFPTTDPVGTLLQVPEQISAHLPQPAGQMPTQPTQVSLPPTAEPAKTAQALSSGSGSQETKIPISLVLRLRNSKKELNDIRFEFTPGRDTAEGVSQELISAGLVDGRDLVIVAANLQKIVEEPQSNRSVTFKLASGVEGSDIPDDGKLIGFAQLSIS</sequence>
<accession>Q5R495</accession>
<gene>
    <name evidence="1" type="primary">OXSR1</name>
</gene>
<protein>
    <recommendedName>
        <fullName>Serine/threonine-protein kinase OSR1</fullName>
        <ecNumber>2.7.11.1</ecNumber>
    </recommendedName>
    <alternativeName>
        <fullName>Oxidative stress-responsive 1 protein</fullName>
    </alternativeName>
</protein>
<proteinExistence type="evidence at transcript level"/>
<feature type="initiator methionine" description="Removed" evidence="1">
    <location>
        <position position="1"/>
    </location>
</feature>
<feature type="chain" id="PRO_0000086459" description="Serine/threonine-protein kinase OSR1">
    <location>
        <begin position="2"/>
        <end position="527"/>
    </location>
</feature>
<feature type="domain" description="Protein kinase" evidence="4">
    <location>
        <begin position="17"/>
        <end position="291"/>
    </location>
</feature>
<feature type="region of interest" description="Disordered" evidence="5">
    <location>
        <begin position="315"/>
        <end position="360"/>
    </location>
</feature>
<feature type="region of interest" description="Disordered" evidence="5">
    <location>
        <begin position="392"/>
        <end position="427"/>
    </location>
</feature>
<feature type="compositionally biased region" description="Acidic residues" evidence="5">
    <location>
        <begin position="334"/>
        <end position="348"/>
    </location>
</feature>
<feature type="compositionally biased region" description="Polar residues" evidence="5">
    <location>
        <begin position="399"/>
        <end position="408"/>
    </location>
</feature>
<feature type="active site" description="Proton acceptor" evidence="3 4">
    <location>
        <position position="146"/>
    </location>
</feature>
<feature type="binding site" evidence="3 4">
    <location>
        <begin position="23"/>
        <end position="31"/>
    </location>
    <ligand>
        <name>ATP</name>
        <dbReference type="ChEBI" id="CHEBI:30616"/>
    </ligand>
</feature>
<feature type="binding site" evidence="1 4">
    <location>
        <position position="46"/>
    </location>
    <ligand>
        <name>ATP</name>
        <dbReference type="ChEBI" id="CHEBI:30616"/>
    </ligand>
</feature>
<feature type="modified residue" description="N-acetylserine" evidence="1">
    <location>
        <position position="2"/>
    </location>
</feature>
<feature type="modified residue" description="Phosphothreonine" evidence="2">
    <location>
        <position position="185"/>
    </location>
</feature>
<feature type="modified residue" description="Phosphothreonine" evidence="1">
    <location>
        <position position="310"/>
    </location>
</feature>
<feature type="modified residue" description="Phosphoserine" evidence="1">
    <location>
        <position position="324"/>
    </location>
</feature>
<feature type="modified residue" description="Phosphoserine" evidence="1">
    <location>
        <position position="325"/>
    </location>
</feature>
<feature type="modified residue" description="Phosphoserine" evidence="1">
    <location>
        <position position="339"/>
    </location>
</feature>
<feature type="modified residue" description="Phosphoserine" evidence="1">
    <location>
        <position position="347"/>
    </location>
</feature>
<feature type="modified residue" description="Phosphoserine" evidence="1">
    <location>
        <position position="359"/>
    </location>
</feature>
<feature type="modified residue" description="Phosphoserine" evidence="1">
    <location>
        <position position="427"/>
    </location>
</feature>
<evidence type="ECO:0000250" key="1">
    <source>
        <dbReference type="UniProtKB" id="O95747"/>
    </source>
</evidence>
<evidence type="ECO:0000250" key="2">
    <source>
        <dbReference type="UniProtKB" id="Q6P9R2"/>
    </source>
</evidence>
<evidence type="ECO:0000250" key="3">
    <source>
        <dbReference type="UniProtKB" id="Q9Z1W9"/>
    </source>
</evidence>
<evidence type="ECO:0000255" key="4">
    <source>
        <dbReference type="PROSITE-ProRule" id="PRU00159"/>
    </source>
</evidence>
<evidence type="ECO:0000256" key="5">
    <source>
        <dbReference type="SAM" id="MobiDB-lite"/>
    </source>
</evidence>
<evidence type="ECO:0000305" key="6"/>
<evidence type="ECO:0000312" key="7">
    <source>
        <dbReference type="EMBL" id="CAH93421.1"/>
    </source>
</evidence>
<dbReference type="EC" id="2.7.11.1"/>
<dbReference type="EMBL" id="CR861361">
    <property type="protein sequence ID" value="CAH93421.1"/>
    <property type="molecule type" value="mRNA"/>
</dbReference>
<dbReference type="RefSeq" id="NP_001127005.1">
    <property type="nucleotide sequence ID" value="NM_001133533.1"/>
</dbReference>
<dbReference type="SMR" id="Q5R495"/>
<dbReference type="FunCoup" id="Q5R495">
    <property type="interactions" value="2814"/>
</dbReference>
<dbReference type="STRING" id="9601.ENSPPYP00000015671"/>
<dbReference type="Ensembl" id="ENSPPYT00000016292.3">
    <property type="protein sequence ID" value="ENSPPYP00000015671.2"/>
    <property type="gene ID" value="ENSPPYG00000014010.3"/>
</dbReference>
<dbReference type="GeneID" id="100174028"/>
<dbReference type="KEGG" id="pon:100174028"/>
<dbReference type="CTD" id="9943"/>
<dbReference type="eggNOG" id="KOG0582">
    <property type="taxonomic scope" value="Eukaryota"/>
</dbReference>
<dbReference type="GeneTree" id="ENSGT00940000162134"/>
<dbReference type="HOGENOM" id="CLU_000288_111_1_1"/>
<dbReference type="InParanoid" id="Q5R495"/>
<dbReference type="OMA" id="KMRTANC"/>
<dbReference type="OrthoDB" id="8693905at2759"/>
<dbReference type="TreeFam" id="TF105339"/>
<dbReference type="Proteomes" id="UP000001595">
    <property type="component" value="Chromosome 3"/>
</dbReference>
<dbReference type="GO" id="GO:0005829">
    <property type="term" value="C:cytosol"/>
    <property type="evidence" value="ECO:0007669"/>
    <property type="project" value="Ensembl"/>
</dbReference>
<dbReference type="GO" id="GO:0005524">
    <property type="term" value="F:ATP binding"/>
    <property type="evidence" value="ECO:0000250"/>
    <property type="project" value="UniProtKB"/>
</dbReference>
<dbReference type="GO" id="GO:0042802">
    <property type="term" value="F:identical protein binding"/>
    <property type="evidence" value="ECO:0007669"/>
    <property type="project" value="Ensembl"/>
</dbReference>
<dbReference type="GO" id="GO:0000287">
    <property type="term" value="F:magnesium ion binding"/>
    <property type="evidence" value="ECO:0000250"/>
    <property type="project" value="UniProtKB"/>
</dbReference>
<dbReference type="GO" id="GO:0019870">
    <property type="term" value="F:potassium channel inhibitor activity"/>
    <property type="evidence" value="ECO:0007669"/>
    <property type="project" value="Ensembl"/>
</dbReference>
<dbReference type="GO" id="GO:0019901">
    <property type="term" value="F:protein kinase binding"/>
    <property type="evidence" value="ECO:0007669"/>
    <property type="project" value="Ensembl"/>
</dbReference>
<dbReference type="GO" id="GO:0106310">
    <property type="term" value="F:protein serine kinase activity"/>
    <property type="evidence" value="ECO:0007669"/>
    <property type="project" value="RHEA"/>
</dbReference>
<dbReference type="GO" id="GO:0004674">
    <property type="term" value="F:protein serine/threonine kinase activity"/>
    <property type="evidence" value="ECO:0000250"/>
    <property type="project" value="UniProtKB"/>
</dbReference>
<dbReference type="GO" id="GO:0044325">
    <property type="term" value="F:transmembrane transporter binding"/>
    <property type="evidence" value="ECO:0007669"/>
    <property type="project" value="Ensembl"/>
</dbReference>
<dbReference type="GO" id="GO:0006884">
    <property type="term" value="P:cell volume homeostasis"/>
    <property type="evidence" value="ECO:0007669"/>
    <property type="project" value="Ensembl"/>
</dbReference>
<dbReference type="GO" id="GO:0071474">
    <property type="term" value="P:cellular hyperosmotic response"/>
    <property type="evidence" value="ECO:0007669"/>
    <property type="project" value="Ensembl"/>
</dbReference>
<dbReference type="GO" id="GO:0071476">
    <property type="term" value="P:cellular hypotonic response"/>
    <property type="evidence" value="ECO:0007669"/>
    <property type="project" value="Ensembl"/>
</dbReference>
<dbReference type="GO" id="GO:0038116">
    <property type="term" value="P:chemokine (C-C motif) ligand 21 signaling pathway"/>
    <property type="evidence" value="ECO:0007669"/>
    <property type="project" value="Ensembl"/>
</dbReference>
<dbReference type="GO" id="GO:0038146">
    <property type="term" value="P:chemokine (C-X-C motif) ligand 12 signaling pathway"/>
    <property type="evidence" value="ECO:0007669"/>
    <property type="project" value="Ensembl"/>
</dbReference>
<dbReference type="GO" id="GO:0035556">
    <property type="term" value="P:intracellular signal transduction"/>
    <property type="evidence" value="ECO:0000250"/>
    <property type="project" value="UniProtKB"/>
</dbReference>
<dbReference type="GO" id="GO:1901380">
    <property type="term" value="P:negative regulation of potassium ion transmembrane transport"/>
    <property type="evidence" value="ECO:0007669"/>
    <property type="project" value="Ensembl"/>
</dbReference>
<dbReference type="GO" id="GO:0007231">
    <property type="term" value="P:osmosensory signaling pathway"/>
    <property type="evidence" value="ECO:0007669"/>
    <property type="project" value="Ensembl"/>
</dbReference>
<dbReference type="GO" id="GO:0010820">
    <property type="term" value="P:positive regulation of T cell chemotaxis"/>
    <property type="evidence" value="ECO:0007669"/>
    <property type="project" value="Ensembl"/>
</dbReference>
<dbReference type="GO" id="GO:0046777">
    <property type="term" value="P:protein autophosphorylation"/>
    <property type="evidence" value="ECO:0000250"/>
    <property type="project" value="UniProtKB"/>
</dbReference>
<dbReference type="GO" id="GO:0006468">
    <property type="term" value="P:protein phosphorylation"/>
    <property type="evidence" value="ECO:0000250"/>
    <property type="project" value="UniProtKB"/>
</dbReference>
<dbReference type="GO" id="GO:0070294">
    <property type="term" value="P:renal sodium ion absorption"/>
    <property type="evidence" value="ECO:0007669"/>
    <property type="project" value="Ensembl"/>
</dbReference>
<dbReference type="GO" id="GO:0006979">
    <property type="term" value="P:response to oxidative stress"/>
    <property type="evidence" value="ECO:0007669"/>
    <property type="project" value="Ensembl"/>
</dbReference>
<dbReference type="GO" id="GO:0009410">
    <property type="term" value="P:response to xenobiotic stimulus"/>
    <property type="evidence" value="ECO:0007669"/>
    <property type="project" value="Ensembl"/>
</dbReference>
<dbReference type="CDD" id="cd06610">
    <property type="entry name" value="STKc_OSR1_SPAK"/>
    <property type="match status" value="1"/>
</dbReference>
<dbReference type="FunFam" id="3.10.20.90:FF:000043">
    <property type="entry name" value="serine/threonine-protein kinase OSR1 isoform X1"/>
    <property type="match status" value="1"/>
</dbReference>
<dbReference type="FunFam" id="3.30.200.20:FF:000114">
    <property type="entry name" value="serine/threonine-protein kinase OSR1 isoform X1"/>
    <property type="match status" value="1"/>
</dbReference>
<dbReference type="FunFam" id="1.10.510.10:FF:000068">
    <property type="entry name" value="STE20/SPS1-related proline-alanine-rich protein kinase"/>
    <property type="match status" value="1"/>
</dbReference>
<dbReference type="Gene3D" id="3.10.20.90">
    <property type="entry name" value="Phosphatidylinositol 3-kinase Catalytic Subunit, Chain A, domain 1"/>
    <property type="match status" value="1"/>
</dbReference>
<dbReference type="Gene3D" id="3.30.200.20">
    <property type="entry name" value="Phosphorylase Kinase, domain 1"/>
    <property type="match status" value="1"/>
</dbReference>
<dbReference type="Gene3D" id="1.10.510.10">
    <property type="entry name" value="Transferase(Phosphotransferase) domain 1"/>
    <property type="match status" value="1"/>
</dbReference>
<dbReference type="InterPro" id="IPR011009">
    <property type="entry name" value="Kinase-like_dom_sf"/>
</dbReference>
<dbReference type="InterPro" id="IPR024678">
    <property type="entry name" value="Kinase_OSR1/WNK_CCT"/>
</dbReference>
<dbReference type="InterPro" id="IPR000719">
    <property type="entry name" value="Prot_kinase_dom"/>
</dbReference>
<dbReference type="InterPro" id="IPR017441">
    <property type="entry name" value="Protein_kinase_ATP_BS"/>
</dbReference>
<dbReference type="InterPro" id="IPR050629">
    <property type="entry name" value="STE20/SPS1-PAK"/>
</dbReference>
<dbReference type="PANTHER" id="PTHR48012:SF1">
    <property type="entry name" value="SERINE_THREONINE-PROTEIN KINASE OSR1"/>
    <property type="match status" value="1"/>
</dbReference>
<dbReference type="PANTHER" id="PTHR48012">
    <property type="entry name" value="STERILE20-LIKE KINASE, ISOFORM B-RELATED"/>
    <property type="match status" value="1"/>
</dbReference>
<dbReference type="Pfam" id="PF12202">
    <property type="entry name" value="OSR1_C"/>
    <property type="match status" value="1"/>
</dbReference>
<dbReference type="Pfam" id="PF00069">
    <property type="entry name" value="Pkinase"/>
    <property type="match status" value="1"/>
</dbReference>
<dbReference type="SMART" id="SM00220">
    <property type="entry name" value="S_TKc"/>
    <property type="match status" value="1"/>
</dbReference>
<dbReference type="SUPFAM" id="SSF56112">
    <property type="entry name" value="Protein kinase-like (PK-like)"/>
    <property type="match status" value="1"/>
</dbReference>
<dbReference type="PROSITE" id="PS00107">
    <property type="entry name" value="PROTEIN_KINASE_ATP"/>
    <property type="match status" value="1"/>
</dbReference>
<dbReference type="PROSITE" id="PS50011">
    <property type="entry name" value="PROTEIN_KINASE_DOM"/>
    <property type="match status" value="1"/>
</dbReference>
<keyword id="KW-0007">Acetylation</keyword>
<keyword id="KW-0067">ATP-binding</keyword>
<keyword id="KW-0963">Cytoplasm</keyword>
<keyword id="KW-0418">Kinase</keyword>
<keyword id="KW-0460">Magnesium</keyword>
<keyword id="KW-0479">Metal-binding</keyword>
<keyword id="KW-0547">Nucleotide-binding</keyword>
<keyword id="KW-0597">Phosphoprotein</keyword>
<keyword id="KW-1185">Reference proteome</keyword>
<keyword id="KW-0723">Serine/threonine-protein kinase</keyword>
<keyword id="KW-0808">Transferase</keyword>
<reference evidence="7" key="1">
    <citation type="submission" date="2004-11" db="EMBL/GenBank/DDBJ databases">
        <authorList>
            <consortium name="The German cDNA consortium"/>
        </authorList>
    </citation>
    <scope>NUCLEOTIDE SEQUENCE [LARGE SCALE MRNA]</scope>
    <source>
        <tissue evidence="7">Brain cortex</tissue>
    </source>
</reference>
<organism>
    <name type="scientific">Pongo abelii</name>
    <name type="common">Sumatran orangutan</name>
    <name type="synonym">Pongo pygmaeus abelii</name>
    <dbReference type="NCBI Taxonomy" id="9601"/>
    <lineage>
        <taxon>Eukaryota</taxon>
        <taxon>Metazoa</taxon>
        <taxon>Chordata</taxon>
        <taxon>Craniata</taxon>
        <taxon>Vertebrata</taxon>
        <taxon>Euteleostomi</taxon>
        <taxon>Mammalia</taxon>
        <taxon>Eutheria</taxon>
        <taxon>Euarchontoglires</taxon>
        <taxon>Primates</taxon>
        <taxon>Haplorrhini</taxon>
        <taxon>Catarrhini</taxon>
        <taxon>Hominidae</taxon>
        <taxon>Pongo</taxon>
    </lineage>
</organism>
<comment type="function">
    <text evidence="1 2">Effector serine/threonine-protein kinase component of the WNK-SPAK/OSR1 kinase cascade, which is involved in various processes, such as ion transport, response to hypertonic stress and blood pressure (By similarity). Specifically recognizes and binds proteins with a RFXV motif (By similarity). Acts downstream of WNK kinases (WNK1, WNK2, WNK3 or WNK4): following activation by WNK kinases, catalyzes phosphorylation of ion cotransporters, such as SLC12A1/NKCC2, SLC12A2/NKCC1, SLC12A3/NCC, SLC12A5/KCC2 or SLC12A6/KCC3, regulating their activity (By similarity). Mediates regulatory volume increase in response to hyperosmotic stress by catalyzing phosphorylation of ion cotransporters SLC12A1/NKCC2, SLC12A2/NKCC1 and SLC12A6/KCC3 downstream of WNK1 and WNK3 kinases (By similarity). Phosphorylation of Na-K-Cl cotransporters SLC12A2/NKCC1 and SLC12A2/NKCC1 promote their activation and ion influx; simultaneously, phosphorylation of K-Cl cotransporters SLC12A5/KCC2 and SLC12A6/KCC3 inhibit their activity, blocking ion efflux (By similarity). Acts as a regulator of NaCl reabsorption in the distal nephron by mediating phosphorylation and activation of the thiazide-sensitive Na-Cl cotransporter SLC12A3/NCC in distal convoluted tubule cells of kidney downstream of WNK4 (By similarity). Also acts as a regulator of angiogenesis in endothelial cells downstream of WNK1 (By similarity). Acts as an activator of inward rectifier potassium channels KCNJ2/Kir2.1 and KCNJ4/Kir2.3 downstream of WNK1: recognizes and binds the RXFXV/I variant motif on KCNJ2/Kir2.1 and KCNJ4/Kir2.3 and regulates their localization to the cell membrane without mediating their phosphorylation (By similarity). Phosphorylates RELL1, RELL2, RELT and PAK1. Phosphorylates PLSCR1 in the presence of RELT (By similarity).</text>
</comment>
<comment type="catalytic activity">
    <reaction evidence="1">
        <text>L-seryl-[protein] + ATP = O-phospho-L-seryl-[protein] + ADP + H(+)</text>
        <dbReference type="Rhea" id="RHEA:17989"/>
        <dbReference type="Rhea" id="RHEA-COMP:9863"/>
        <dbReference type="Rhea" id="RHEA-COMP:11604"/>
        <dbReference type="ChEBI" id="CHEBI:15378"/>
        <dbReference type="ChEBI" id="CHEBI:29999"/>
        <dbReference type="ChEBI" id="CHEBI:30616"/>
        <dbReference type="ChEBI" id="CHEBI:83421"/>
        <dbReference type="ChEBI" id="CHEBI:456216"/>
        <dbReference type="EC" id="2.7.11.1"/>
    </reaction>
</comment>
<comment type="catalytic activity">
    <reaction evidence="1">
        <text>L-threonyl-[protein] + ATP = O-phospho-L-threonyl-[protein] + ADP + H(+)</text>
        <dbReference type="Rhea" id="RHEA:46608"/>
        <dbReference type="Rhea" id="RHEA-COMP:11060"/>
        <dbReference type="Rhea" id="RHEA-COMP:11605"/>
        <dbReference type="ChEBI" id="CHEBI:15378"/>
        <dbReference type="ChEBI" id="CHEBI:30013"/>
        <dbReference type="ChEBI" id="CHEBI:30616"/>
        <dbReference type="ChEBI" id="CHEBI:61977"/>
        <dbReference type="ChEBI" id="CHEBI:456216"/>
        <dbReference type="EC" id="2.7.11.1"/>
    </reaction>
</comment>
<comment type="cofactor">
    <cofactor evidence="1">
        <name>Mg(2+)</name>
        <dbReference type="ChEBI" id="CHEBI:18420"/>
    </cofactor>
</comment>
<comment type="activity regulation">
    <text evidence="1">Activated following phosphorylation by WNK kinases (WNK1, WNK2, WNK3 or WNK4).</text>
</comment>
<comment type="subcellular location">
    <subcellularLocation>
        <location evidence="1">Cytoplasm</location>
    </subcellularLocation>
</comment>
<comment type="PTM">
    <text evidence="1">Phosphorylation at Thr-185 by WNK kinases (WNK1, WNK2, WNK3 or WNK4) is required for activation. Autophosphorylated; promoting its activity.</text>
</comment>
<comment type="similarity">
    <text evidence="6">Belongs to the protein kinase superfamily. STE Ser/Thr protein kinase family. STE20 subfamily.</text>
</comment>